<dbReference type="EC" id="2.7.11.2"/>
<dbReference type="EMBL" id="DQ468386">
    <property type="protein sequence ID" value="ABF13212.1"/>
    <property type="molecule type" value="mRNA"/>
</dbReference>
<dbReference type="SMR" id="Q1KMR4"/>
<dbReference type="FunCoup" id="Q1KMR4">
    <property type="interactions" value="804"/>
</dbReference>
<dbReference type="InParanoid" id="Q1KMR4"/>
<dbReference type="BRENDA" id="2.7.11.2">
    <property type="organism ID" value="9215"/>
</dbReference>
<dbReference type="Proteomes" id="UP000472240">
    <property type="component" value="Unplaced"/>
</dbReference>
<dbReference type="GO" id="GO:0005759">
    <property type="term" value="C:mitochondrial matrix"/>
    <property type="evidence" value="ECO:0007669"/>
    <property type="project" value="UniProtKB-SubCell"/>
</dbReference>
<dbReference type="GO" id="GO:0005524">
    <property type="term" value="F:ATP binding"/>
    <property type="evidence" value="ECO:0007669"/>
    <property type="project" value="UniProtKB-KW"/>
</dbReference>
<dbReference type="GO" id="GO:0004740">
    <property type="term" value="F:pyruvate dehydrogenase (acetyl-transferring) kinase activity"/>
    <property type="evidence" value="ECO:0000250"/>
    <property type="project" value="UniProtKB"/>
</dbReference>
<dbReference type="GO" id="GO:0071398">
    <property type="term" value="P:cellular response to fatty acid"/>
    <property type="evidence" value="ECO:0000250"/>
    <property type="project" value="UniProtKB"/>
</dbReference>
<dbReference type="GO" id="GO:0009267">
    <property type="term" value="P:cellular response to starvation"/>
    <property type="evidence" value="ECO:0000250"/>
    <property type="project" value="UniProtKB"/>
</dbReference>
<dbReference type="GO" id="GO:0042750">
    <property type="term" value="P:hibernation"/>
    <property type="evidence" value="ECO:0007669"/>
    <property type="project" value="UniProtKB-KW"/>
</dbReference>
<dbReference type="GO" id="GO:0008286">
    <property type="term" value="P:insulin receptor signaling pathway"/>
    <property type="evidence" value="ECO:0000250"/>
    <property type="project" value="UniProtKB"/>
</dbReference>
<dbReference type="GO" id="GO:0072593">
    <property type="term" value="P:reactive oxygen species metabolic process"/>
    <property type="evidence" value="ECO:0000250"/>
    <property type="project" value="UniProtKB"/>
</dbReference>
<dbReference type="GO" id="GO:0010510">
    <property type="term" value="P:regulation of acetyl-CoA biosynthetic process from pyruvate"/>
    <property type="evidence" value="ECO:0000250"/>
    <property type="project" value="UniProtKB"/>
</dbReference>
<dbReference type="GO" id="GO:0042304">
    <property type="term" value="P:regulation of fatty acid biosynthetic process"/>
    <property type="evidence" value="ECO:0000250"/>
    <property type="project" value="UniProtKB"/>
</dbReference>
<dbReference type="GO" id="GO:0010906">
    <property type="term" value="P:regulation of glucose metabolic process"/>
    <property type="evidence" value="ECO:0000250"/>
    <property type="project" value="UniProtKB"/>
</dbReference>
<dbReference type="CDD" id="cd16929">
    <property type="entry name" value="HATPase_PDK-like"/>
    <property type="match status" value="1"/>
</dbReference>
<dbReference type="FunFam" id="1.20.140.20:FF:000001">
    <property type="entry name" value="[Pyruvate dehydrogenase (acetyl-transferring)] kinase isozyme 2, mitochondrial"/>
    <property type="match status" value="1"/>
</dbReference>
<dbReference type="FunFam" id="3.30.565.10:FF:000007">
    <property type="entry name" value="Mitochondrial pyruvate dehydrogenase kinase isoform 2"/>
    <property type="match status" value="1"/>
</dbReference>
<dbReference type="Gene3D" id="1.20.140.20">
    <property type="entry name" value="Alpha-ketoacid/pyruvate dehydrogenase kinase, N-terminal domain"/>
    <property type="match status" value="1"/>
</dbReference>
<dbReference type="Gene3D" id="3.30.565.10">
    <property type="entry name" value="Histidine kinase-like ATPase, C-terminal domain"/>
    <property type="match status" value="1"/>
</dbReference>
<dbReference type="InterPro" id="IPR036784">
    <property type="entry name" value="AK/P_DHK_N_sf"/>
</dbReference>
<dbReference type="InterPro" id="IPR018955">
    <property type="entry name" value="BCDHK/PDK_N"/>
</dbReference>
<dbReference type="InterPro" id="IPR039028">
    <property type="entry name" value="BCKD/PDK"/>
</dbReference>
<dbReference type="InterPro" id="IPR036890">
    <property type="entry name" value="HATPase_C_sf"/>
</dbReference>
<dbReference type="InterPro" id="IPR005467">
    <property type="entry name" value="His_kinase_dom"/>
</dbReference>
<dbReference type="PANTHER" id="PTHR11947:SF22">
    <property type="entry name" value="[PYRUVATE DEHYDROGENASE (ACETYL-TRANSFERRING)] KINASE ISOZYME 4, MITOCHONDRIAL"/>
    <property type="match status" value="1"/>
</dbReference>
<dbReference type="PANTHER" id="PTHR11947">
    <property type="entry name" value="PYRUVATE DEHYDROGENASE KINASE"/>
    <property type="match status" value="1"/>
</dbReference>
<dbReference type="Pfam" id="PF10436">
    <property type="entry name" value="BCDHK_Adom3"/>
    <property type="match status" value="1"/>
</dbReference>
<dbReference type="Pfam" id="PF02518">
    <property type="entry name" value="HATPase_c"/>
    <property type="match status" value="1"/>
</dbReference>
<dbReference type="SMART" id="SM00387">
    <property type="entry name" value="HATPase_c"/>
    <property type="match status" value="1"/>
</dbReference>
<dbReference type="SUPFAM" id="SSF69012">
    <property type="entry name" value="alpha-ketoacid dehydrogenase kinase, N-terminal domain"/>
    <property type="match status" value="1"/>
</dbReference>
<dbReference type="SUPFAM" id="SSF55874">
    <property type="entry name" value="ATPase domain of HSP90 chaperone/DNA topoisomerase II/histidine kinase"/>
    <property type="match status" value="1"/>
</dbReference>
<dbReference type="PROSITE" id="PS50109">
    <property type="entry name" value="HIS_KIN"/>
    <property type="match status" value="1"/>
</dbReference>
<name>PDK4_RHIFE</name>
<keyword id="KW-0067">ATP-binding</keyword>
<keyword id="KW-0909">Hibernation</keyword>
<keyword id="KW-0418">Kinase</keyword>
<keyword id="KW-0496">Mitochondrion</keyword>
<keyword id="KW-0547">Nucleotide-binding</keyword>
<keyword id="KW-1185">Reference proteome</keyword>
<keyword id="KW-0808">Transferase</keyword>
<keyword id="KW-0809">Transit peptide</keyword>
<gene>
    <name type="primary">PDK4</name>
</gene>
<proteinExistence type="evidence at transcript level"/>
<accession>Q1KMR4</accession>
<sequence length="412" mass="46654">MKAARFVMRSARSLSSAGLVPREVEHFSRYSPSPLSMKQLLDFGSENACERTSSAFLRQELPVRLANILKEIDILPDRLVNTSSVQLVKSWYIQSLMELVEFHERSPDDQKVLSDFVDTLITVRNRHHNVVPTMAQGIIEYKDSCTVDPVTNQNLQYFLDRFYMNRISTRMLMNQHILIFSDSQTGNPSHIGSIDPNCNVAAVVQDAFECSRMLCDQYYLTSPELKLTQVNGKFPGEPIHIVYVPSHLHHMLFELFKNAMRATVEHQENEPSLTPVEVTVVLGKEDLTIKISDRGGGVPLRITDRLFSYMYSTAPTPVMDNSRNAPLAGFGYGLPISRLYAKYFQGDLHLYSLSGYGTDAIIYLKALSSESVEKLPVFNKSAFKHYQMSIEADDWCIPSKEPKNLAKEKVAV</sequence>
<organism>
    <name type="scientific">Rhinolophus ferrumequinum</name>
    <name type="common">Greater horseshoe bat</name>
    <dbReference type="NCBI Taxonomy" id="59479"/>
    <lineage>
        <taxon>Eukaryota</taxon>
        <taxon>Metazoa</taxon>
        <taxon>Chordata</taxon>
        <taxon>Craniata</taxon>
        <taxon>Vertebrata</taxon>
        <taxon>Euteleostomi</taxon>
        <taxon>Mammalia</taxon>
        <taxon>Eutheria</taxon>
        <taxon>Laurasiatheria</taxon>
        <taxon>Chiroptera</taxon>
        <taxon>Yinpterochiroptera</taxon>
        <taxon>Rhinolophoidea</taxon>
        <taxon>Rhinolophidae</taxon>
        <taxon>Rhinolophinae</taxon>
        <taxon>Rhinolophus</taxon>
    </lineage>
</organism>
<protein>
    <recommendedName>
        <fullName>[Pyruvate dehydrogenase (acetyl-transferring)] kinase isozyme 4, mitochondrial</fullName>
        <ecNumber>2.7.11.2</ecNumber>
    </recommendedName>
    <alternativeName>
        <fullName>Pyruvate dehydrogenase kinase isoform 4</fullName>
    </alternativeName>
</protein>
<feature type="transit peptide" description="Mitochondrion" evidence="2">
    <location>
        <begin position="1"/>
        <end status="unknown"/>
    </location>
</feature>
<feature type="chain" id="PRO_0000261316" description="[Pyruvate dehydrogenase (acetyl-transferring)] kinase isozyme 4, mitochondrial">
    <location>
        <begin status="unknown"/>
        <end position="412"/>
    </location>
</feature>
<feature type="domain" description="Histidine kinase" evidence="3">
    <location>
        <begin position="138"/>
        <end position="368"/>
    </location>
</feature>
<feature type="binding site" evidence="1">
    <location>
        <begin position="254"/>
        <end position="261"/>
    </location>
    <ligand>
        <name>ATP</name>
        <dbReference type="ChEBI" id="CHEBI:30616"/>
    </ligand>
</feature>
<feature type="binding site" evidence="1">
    <location>
        <position position="293"/>
    </location>
    <ligand>
        <name>ATP</name>
        <dbReference type="ChEBI" id="CHEBI:30616"/>
    </ligand>
</feature>
<feature type="binding site" evidence="1">
    <location>
        <begin position="312"/>
        <end position="313"/>
    </location>
    <ligand>
        <name>ATP</name>
        <dbReference type="ChEBI" id="CHEBI:30616"/>
    </ligand>
</feature>
<feature type="binding site" evidence="1">
    <location>
        <begin position="329"/>
        <end position="334"/>
    </location>
    <ligand>
        <name>ATP</name>
        <dbReference type="ChEBI" id="CHEBI:30616"/>
    </ligand>
</feature>
<feature type="site" description="Interaction with the other subunit in the homodimer" evidence="1">
    <location>
        <position position="157"/>
    </location>
</feature>
<feature type="site" description="Interaction with the other subunit in the homodimer" evidence="1">
    <location>
        <position position="161"/>
    </location>
</feature>
<feature type="site" description="Interaction with the other subunit in the homodimer" evidence="1">
    <location>
        <position position="395"/>
    </location>
</feature>
<comment type="function">
    <text evidence="1">Kinase that plays a key role in regulation of glucose and fatty acid metabolism and homeostasis via phosphorylation of the pyruvate dehydrogenase subunits PDHA1 and PDHA2. This inhibits pyruvate dehydrogenase activity, and thereby regulates metabolite flux through the tricarboxylic acid cycle, down-regulates aerobic respiration and inhibits the formation of acetyl-coenzyme A from pyruvate. Inhibition of pyruvate dehydrogenase decreases glucose utilization and increases fat metabolism in response to prolonged fasting and starvation. Plays an important role in maintaining normal blood glucose levels under starvation, and is involved in the insulin signaling cascade. Via its regulation of pyruvate dehydrogenase activity, plays an important role in maintaining normal blood pH and in preventing the accumulation of ketone bodies under starvation. In the fed state, mediates cellular responses to glucose levels and to a high-fat diet. Regulates both fatty acid oxidation and de novo fatty acid biosynthesis. Plays a role in the generation of reactive oxygen species. Protects detached epithelial cells against anoikis. Plays a role in cell proliferation via its role in regulating carbohydrate and fatty acid metabolism (By similarity).</text>
</comment>
<comment type="catalytic activity">
    <reaction>
        <text>L-seryl-[pyruvate dehydrogenase E1 alpha subunit] + ATP = O-phospho-L-seryl-[pyruvate dehydrogenase E1 alpha subunit] + ADP + H(+)</text>
        <dbReference type="Rhea" id="RHEA:23052"/>
        <dbReference type="Rhea" id="RHEA-COMP:13689"/>
        <dbReference type="Rhea" id="RHEA-COMP:13690"/>
        <dbReference type="ChEBI" id="CHEBI:15378"/>
        <dbReference type="ChEBI" id="CHEBI:29999"/>
        <dbReference type="ChEBI" id="CHEBI:30616"/>
        <dbReference type="ChEBI" id="CHEBI:83421"/>
        <dbReference type="ChEBI" id="CHEBI:456216"/>
        <dbReference type="EC" id="2.7.11.2"/>
    </reaction>
</comment>
<comment type="subunit">
    <text evidence="1">Homodimer. Interacts with the pyruvate dehydrogenase complex subunit DLAT, and is part of the multimeric pyruvate dehydrogenase complex that contains multiple copies of pyruvate dehydrogenase (E1), dihydrolipoamide acetyltransferase (DLAT, E2) and lipoamide dehydrogenase (DLD, E3) (By similarity).</text>
</comment>
<comment type="subcellular location">
    <subcellularLocation>
        <location evidence="1">Mitochondrion matrix</location>
    </subcellularLocation>
</comment>
<comment type="tissue specificity">
    <text evidence="4">Detected in heart, white adipose tissue and muscle.</text>
</comment>
<comment type="induction">
    <text evidence="4">Up-regulated in white adipose tissue during hibernation.</text>
</comment>
<comment type="similarity">
    <text evidence="5">Belongs to the PDK/BCKDK protein kinase family.</text>
</comment>
<evidence type="ECO:0000250" key="1"/>
<evidence type="ECO:0000255" key="2"/>
<evidence type="ECO:0000255" key="3">
    <source>
        <dbReference type="PROSITE-ProRule" id="PRU00107"/>
    </source>
</evidence>
<evidence type="ECO:0000269" key="4">
    <source>
    </source>
</evidence>
<evidence type="ECO:0000305" key="5"/>
<reference key="1">
    <citation type="journal article" date="2007" name="Comp. Biochem. Physiol.">
        <title>Cloning and expression of PDK4, FOXO1A and DYRK1A from the hibernating greater horseshoe bat (Rhinolophus ferrumequinum).</title>
        <authorList>
            <person name="Chen J."/>
            <person name="Sun M."/>
            <person name="Liang B."/>
            <person name="Xu A."/>
            <person name="Zhang S."/>
            <person name="Wu D."/>
        </authorList>
    </citation>
    <scope>NUCLEOTIDE SEQUENCE [MRNA]</scope>
    <scope>INDUCTION</scope>
    <scope>TISSUE SPECIFICITY</scope>
</reference>